<organism>
    <name type="scientific">Sus scrofa</name>
    <name type="common">Pig</name>
    <dbReference type="NCBI Taxonomy" id="9823"/>
    <lineage>
        <taxon>Eukaryota</taxon>
        <taxon>Metazoa</taxon>
        <taxon>Chordata</taxon>
        <taxon>Craniata</taxon>
        <taxon>Vertebrata</taxon>
        <taxon>Euteleostomi</taxon>
        <taxon>Mammalia</taxon>
        <taxon>Eutheria</taxon>
        <taxon>Laurasiatheria</taxon>
        <taxon>Artiodactyla</taxon>
        <taxon>Suina</taxon>
        <taxon>Suidae</taxon>
        <taxon>Sus</taxon>
    </lineage>
</organism>
<reference key="1">
    <citation type="submission" date="1996-02" db="EMBL/GenBank/DDBJ databases">
        <authorList>
            <person name="Echetebu Z.O."/>
            <person name="Nevils M."/>
            <person name="Bixby J.A."/>
            <person name="Roberts R.M."/>
            <person name="Trout W.E."/>
        </authorList>
    </citation>
    <scope>NUCLEOTIDE SEQUENCE [MRNA]</scope>
</reference>
<reference key="2">
    <citation type="journal article" date="1989" name="J. Mol. Evol.">
        <title>Episodic evolution in the stomach lysozymes of ruminants.</title>
        <authorList>
            <person name="Jolles J."/>
            <person name="Jolles P."/>
            <person name="Bowman B.H."/>
            <person name="Prager E.M."/>
            <person name="Stewart C.-B."/>
            <person name="Wilson A.C."/>
        </authorList>
    </citation>
    <scope>PROTEIN SEQUENCE OF 19-148</scope>
    <source>
        <tissue>Stomach</tissue>
    </source>
</reference>
<name>LYSC3_PIG</name>
<proteinExistence type="evidence at protein level"/>
<sequence>MKTLLVLALLLLSVSVQAKVYDRCEFARILKKSGMDGYRGVSLANWVCLAKWESNFNTKATNYNPGSQSTDYGIFQINSRYWCNDGKTPKAVNACHISCKVLLDDDLSQDIECAKRVVRDPQGIKAWVAWKAHCQNKDVSQYIRGCKL</sequence>
<keyword id="KW-0929">Antimicrobial</keyword>
<keyword id="KW-0081">Bacteriolytic enzyme</keyword>
<keyword id="KW-0222">Digestion</keyword>
<keyword id="KW-0903">Direct protein sequencing</keyword>
<keyword id="KW-1015">Disulfide bond</keyword>
<keyword id="KW-0326">Glycosidase</keyword>
<keyword id="KW-0378">Hydrolase</keyword>
<keyword id="KW-1185">Reference proteome</keyword>
<keyword id="KW-0964">Secreted</keyword>
<keyword id="KW-0732">Signal</keyword>
<protein>
    <recommendedName>
        <fullName>Lysozyme C-3</fullName>
        <ecNumber>3.2.1.17</ecNumber>
    </recommendedName>
    <alternativeName>
        <fullName>1,4-beta-N-acetylmuramidase C</fullName>
    </alternativeName>
</protein>
<comment type="function">
    <text>Lysozymes have primarily a bacteriolytic function; those in tissues and body fluids are associated with the monocyte-macrophage system and enhance the activity of immunoagents.</text>
</comment>
<comment type="catalytic activity">
    <reaction>
        <text>Hydrolysis of (1-&gt;4)-beta-linkages between N-acetylmuramic acid and N-acetyl-D-glucosamine residues in a peptidoglycan and between N-acetyl-D-glucosamine residues in chitodextrins.</text>
        <dbReference type="EC" id="3.2.1.17"/>
    </reaction>
</comment>
<comment type="subunit">
    <text>Monomer.</text>
</comment>
<comment type="subcellular location">
    <subcellularLocation>
        <location>Secreted</location>
    </subcellularLocation>
</comment>
<comment type="miscellaneous">
    <text>Lysozyme C is capable of both hydrolysis and transglycosylation; it also shows a slight esterase activity. It acts rapidly on both peptide-substituted and unsubstituted peptidoglycan, and slowly on chitin oligosaccharides.</text>
</comment>
<comment type="similarity">
    <text evidence="1">Belongs to the glycosyl hydrolase 22 family.</text>
</comment>
<feature type="signal peptide" evidence="2">
    <location>
        <begin position="1"/>
        <end position="18"/>
    </location>
</feature>
<feature type="chain" id="PRO_0000018480" description="Lysozyme C-3">
    <location>
        <begin position="19"/>
        <end position="148"/>
    </location>
</feature>
<feature type="domain" description="C-type lysozyme" evidence="1">
    <location>
        <begin position="19"/>
        <end position="148"/>
    </location>
</feature>
<feature type="active site" evidence="1">
    <location>
        <position position="53"/>
    </location>
</feature>
<feature type="active site" evidence="1">
    <location>
        <position position="71"/>
    </location>
</feature>
<feature type="disulfide bond" evidence="1">
    <location>
        <begin position="24"/>
        <end position="146"/>
    </location>
</feature>
<feature type="disulfide bond" evidence="1">
    <location>
        <begin position="48"/>
        <end position="134"/>
    </location>
</feature>
<feature type="disulfide bond" evidence="1">
    <location>
        <begin position="83"/>
        <end position="99"/>
    </location>
</feature>
<feature type="disulfide bond" evidence="1">
    <location>
        <begin position="95"/>
        <end position="113"/>
    </location>
</feature>
<evidence type="ECO:0000255" key="1">
    <source>
        <dbReference type="PROSITE-ProRule" id="PRU00680"/>
    </source>
</evidence>
<evidence type="ECO:0000269" key="2">
    <source>
    </source>
</evidence>
<dbReference type="EC" id="3.2.1.17"/>
<dbReference type="EMBL" id="U44435">
    <property type="protein sequence ID" value="AAA86644.1"/>
    <property type="molecule type" value="mRNA"/>
</dbReference>
<dbReference type="PIR" id="S10047">
    <property type="entry name" value="S10047"/>
</dbReference>
<dbReference type="SMR" id="P12069"/>
<dbReference type="FunCoup" id="P12069">
    <property type="interactions" value="56"/>
</dbReference>
<dbReference type="CAZy" id="GH22">
    <property type="family name" value="Glycoside Hydrolase Family 22"/>
</dbReference>
<dbReference type="PeptideAtlas" id="P12069"/>
<dbReference type="Ensembl" id="ENSSSCT00015090686.1">
    <property type="protein sequence ID" value="ENSSSCP00015037106.1"/>
    <property type="gene ID" value="ENSSSCG00015067276.1"/>
</dbReference>
<dbReference type="Ensembl" id="ENSSSCT00085005789">
    <property type="protein sequence ID" value="ENSSSCP00085004220"/>
    <property type="gene ID" value="ENSSSCG00085003170"/>
</dbReference>
<dbReference type="Ensembl" id="ENSSSCT00115022960">
    <property type="protein sequence ID" value="ENSSSCP00115021771"/>
    <property type="gene ID" value="ENSSSCG00115013257"/>
</dbReference>
<dbReference type="InParanoid" id="P12069"/>
<dbReference type="Reactome" id="R-SSC-6798695">
    <property type="pathway name" value="Neutrophil degranulation"/>
</dbReference>
<dbReference type="Reactome" id="R-SSC-6803157">
    <property type="pathway name" value="Antimicrobial peptides"/>
</dbReference>
<dbReference type="Proteomes" id="UP000008227">
    <property type="component" value="Unplaced"/>
</dbReference>
<dbReference type="Proteomes" id="UP000314985">
    <property type="component" value="Unplaced"/>
</dbReference>
<dbReference type="Proteomes" id="UP000694570">
    <property type="component" value="Unplaced"/>
</dbReference>
<dbReference type="Proteomes" id="UP000694571">
    <property type="component" value="Unplaced"/>
</dbReference>
<dbReference type="Proteomes" id="UP000694720">
    <property type="component" value="Unplaced"/>
</dbReference>
<dbReference type="Proteomes" id="UP000694722">
    <property type="component" value="Unplaced"/>
</dbReference>
<dbReference type="Proteomes" id="UP000694723">
    <property type="component" value="Unplaced"/>
</dbReference>
<dbReference type="Proteomes" id="UP000694724">
    <property type="component" value="Unplaced"/>
</dbReference>
<dbReference type="Proteomes" id="UP000694725">
    <property type="component" value="Unplaced"/>
</dbReference>
<dbReference type="Proteomes" id="UP000694726">
    <property type="component" value="Unplaced"/>
</dbReference>
<dbReference type="Proteomes" id="UP000694727">
    <property type="component" value="Unplaced"/>
</dbReference>
<dbReference type="Proteomes" id="UP000694728">
    <property type="component" value="Unplaced"/>
</dbReference>
<dbReference type="GO" id="GO:0005576">
    <property type="term" value="C:extracellular region"/>
    <property type="evidence" value="ECO:0007669"/>
    <property type="project" value="UniProtKB-SubCell"/>
</dbReference>
<dbReference type="GO" id="GO:0003796">
    <property type="term" value="F:lysozyme activity"/>
    <property type="evidence" value="ECO:0000318"/>
    <property type="project" value="GO_Central"/>
</dbReference>
<dbReference type="GO" id="GO:0050829">
    <property type="term" value="P:defense response to Gram-negative bacterium"/>
    <property type="evidence" value="ECO:0000318"/>
    <property type="project" value="GO_Central"/>
</dbReference>
<dbReference type="GO" id="GO:0050830">
    <property type="term" value="P:defense response to Gram-positive bacterium"/>
    <property type="evidence" value="ECO:0000318"/>
    <property type="project" value="GO_Central"/>
</dbReference>
<dbReference type="GO" id="GO:0007586">
    <property type="term" value="P:digestion"/>
    <property type="evidence" value="ECO:0007669"/>
    <property type="project" value="UniProtKB-KW"/>
</dbReference>
<dbReference type="GO" id="GO:0031640">
    <property type="term" value="P:killing of cells of another organism"/>
    <property type="evidence" value="ECO:0007669"/>
    <property type="project" value="UniProtKB-KW"/>
</dbReference>
<dbReference type="CDD" id="cd16897">
    <property type="entry name" value="LYZ_C"/>
    <property type="match status" value="1"/>
</dbReference>
<dbReference type="FunFam" id="1.10.530.10:FF:000001">
    <property type="entry name" value="Lysozyme C"/>
    <property type="match status" value="1"/>
</dbReference>
<dbReference type="Gene3D" id="1.10.530.10">
    <property type="match status" value="1"/>
</dbReference>
<dbReference type="InterPro" id="IPR001916">
    <property type="entry name" value="Glyco_hydro_22"/>
</dbReference>
<dbReference type="InterPro" id="IPR019799">
    <property type="entry name" value="Glyco_hydro_22_CS"/>
</dbReference>
<dbReference type="InterPro" id="IPR000974">
    <property type="entry name" value="Glyco_hydro_22_lys"/>
</dbReference>
<dbReference type="InterPro" id="IPR023346">
    <property type="entry name" value="Lysozyme-like_dom_sf"/>
</dbReference>
<dbReference type="PANTHER" id="PTHR11407">
    <property type="entry name" value="LYSOZYME C"/>
    <property type="match status" value="1"/>
</dbReference>
<dbReference type="PANTHER" id="PTHR11407:SF28">
    <property type="entry name" value="LYSOZYME C"/>
    <property type="match status" value="1"/>
</dbReference>
<dbReference type="Pfam" id="PF00062">
    <property type="entry name" value="Lys"/>
    <property type="match status" value="1"/>
</dbReference>
<dbReference type="PRINTS" id="PR00137">
    <property type="entry name" value="LYSOZYME"/>
</dbReference>
<dbReference type="PRINTS" id="PR00135">
    <property type="entry name" value="LYZLACT"/>
</dbReference>
<dbReference type="SMART" id="SM00263">
    <property type="entry name" value="LYZ1"/>
    <property type="match status" value="1"/>
</dbReference>
<dbReference type="SUPFAM" id="SSF53955">
    <property type="entry name" value="Lysozyme-like"/>
    <property type="match status" value="1"/>
</dbReference>
<dbReference type="PROSITE" id="PS00128">
    <property type="entry name" value="GLYCOSYL_HYDROL_F22_1"/>
    <property type="match status" value="1"/>
</dbReference>
<dbReference type="PROSITE" id="PS51348">
    <property type="entry name" value="GLYCOSYL_HYDROL_F22_2"/>
    <property type="match status" value="1"/>
</dbReference>
<accession>P12069</accession>